<comment type="function">
    <text evidence="5">Increases ligand-dependent transcriptional activity of AR and other nuclear hormone receptors.</text>
</comment>
<comment type="subunit">
    <text evidence="5">Interacts with AR, SMARCA4/BRG1 and SMARCE1/BAF57. Interaction with either SMARCA4 and SMARCE1 enhances AR-mediated transcription.</text>
</comment>
<comment type="interaction">
    <interactant intactId="EBI-745786">
        <id>Q8NF64</id>
    </interactant>
    <interactant intactId="EBI-10266832">
        <id>Q8N5N6</id>
        <label>ARSJ</label>
    </interactant>
    <organismsDiffer>false</organismsDiffer>
    <experiments>3</experiments>
</comment>
<comment type="interaction">
    <interactant intactId="EBI-745786">
        <id>Q8NF64</id>
    </interactant>
    <interactant intactId="EBI-16429704">
        <id>A0A0S2Z5G4</id>
        <label>BANP</label>
    </interactant>
    <organismsDiffer>false</organismsDiffer>
    <experiments>3</experiments>
</comment>
<comment type="interaction">
    <interactant intactId="EBI-745786">
        <id>Q8NF64</id>
    </interactant>
    <interactant intactId="EBI-16429313">
        <id>B4DE54</id>
        <label>BANP</label>
    </interactant>
    <organismsDiffer>false</organismsDiffer>
    <experiments>3</experiments>
</comment>
<comment type="interaction">
    <interactant intactId="EBI-745786">
        <id>Q8NF64</id>
    </interactant>
    <interactant intactId="EBI-11524452">
        <id>Q8N9N5-2</id>
        <label>BANP</label>
    </interactant>
    <organismsDiffer>false</organismsDiffer>
    <experiments>3</experiments>
</comment>
<comment type="interaction">
    <interactant intactId="EBI-745786">
        <id>Q8NF64</id>
    </interactant>
    <interactant intactId="EBI-16429296">
        <id>Q8N9N5-7</id>
        <label>BANP</label>
    </interactant>
    <organismsDiffer>false</organismsDiffer>
    <experiments>3</experiments>
</comment>
<comment type="interaction">
    <interactant intactId="EBI-745786">
        <id>Q8NF64</id>
    </interactant>
    <interactant intactId="EBI-2654687">
        <id>O75575</id>
        <label>CRCP</label>
    </interactant>
    <organismsDiffer>false</organismsDiffer>
    <experiments>3</experiments>
</comment>
<comment type="interaction">
    <interactant intactId="EBI-745786">
        <id>Q8NF64</id>
    </interactant>
    <interactant intactId="EBI-714158">
        <id>Q13526</id>
        <label>PIN1</label>
    </interactant>
    <organismsDiffer>false</organismsDiffer>
    <experiments>4</experiments>
</comment>
<comment type="interaction">
    <interactant intactId="EBI-10182121">
        <id>Q8NF64-2</id>
    </interactant>
    <interactant intactId="EBI-10266832">
        <id>Q8N5N6</id>
        <label>ARSJ</label>
    </interactant>
    <organismsDiffer>false</organismsDiffer>
    <experiments>3</experiments>
</comment>
<comment type="interaction">
    <interactant intactId="EBI-10182121">
        <id>Q8NF64-2</id>
    </interactant>
    <interactant intactId="EBI-707573">
        <id>Q8WXK3</id>
        <label>ASB13</label>
    </interactant>
    <organismsDiffer>false</organismsDiffer>
    <experiments>3</experiments>
</comment>
<comment type="interaction">
    <interactant intactId="EBI-10182121">
        <id>Q8NF64-2</id>
    </interactant>
    <interactant intactId="EBI-744695">
        <id>Q8N9N5</id>
        <label>BANP</label>
    </interactant>
    <organismsDiffer>false</organismsDiffer>
    <experiments>3</experiments>
</comment>
<comment type="interaction">
    <interactant intactId="EBI-10182121">
        <id>Q8NF64-2</id>
    </interactant>
    <interactant intactId="EBI-744298">
        <id>Q9BSF0</id>
        <label>C2orf88</label>
    </interactant>
    <organismsDiffer>false</organismsDiffer>
    <experiments>3</experiments>
</comment>
<comment type="interaction">
    <interactant intactId="EBI-10182121">
        <id>Q8NF64-2</id>
    </interactant>
    <interactant intactId="EBI-2654687">
        <id>O75575</id>
        <label>CRCP</label>
    </interactant>
    <organismsDiffer>false</organismsDiffer>
    <experiments>3</experiments>
</comment>
<comment type="interaction">
    <interactant intactId="EBI-10182121">
        <id>Q8NF64-2</id>
    </interactant>
    <interactant intactId="EBI-5663129">
        <id>Q96HW7</id>
        <label>INTS4</label>
    </interactant>
    <organismsDiffer>false</organismsDiffer>
    <experiments>3</experiments>
</comment>
<comment type="interaction">
    <interactant intactId="EBI-10182121">
        <id>Q8NF64-2</id>
    </interactant>
    <interactant intactId="EBI-10208650">
        <id>P41271</id>
        <label>NBL1</label>
    </interactant>
    <organismsDiffer>false</organismsDiffer>
    <experiments>3</experiments>
</comment>
<comment type="interaction">
    <interactant intactId="EBI-10182121">
        <id>Q8NF64-2</id>
    </interactant>
    <interactant intactId="EBI-714158">
        <id>Q13526</id>
        <label>PIN1</label>
    </interactant>
    <organismsDiffer>false</organismsDiffer>
    <experiments>3</experiments>
</comment>
<comment type="interaction">
    <interactant intactId="EBI-10182121">
        <id>Q8NF64-2</id>
    </interactant>
    <interactant intactId="EBI-746180">
        <id>Q9Y467</id>
        <label>SALL2</label>
    </interactant>
    <organismsDiffer>false</organismsDiffer>
    <experiments>3</experiments>
</comment>
<comment type="interaction">
    <interactant intactId="EBI-10182121">
        <id>Q8NF64-2</id>
    </interactant>
    <interactant intactId="EBI-954338">
        <id>O15126</id>
        <label>SCAMP1</label>
    </interactant>
    <organismsDiffer>false</organismsDiffer>
    <experiments>3</experiments>
</comment>
<comment type="interaction">
    <interactant intactId="EBI-10182121">
        <id>Q8NF64-2</id>
    </interactant>
    <interactant intactId="EBI-10216195">
        <id>P59797</id>
        <label>SELENOV</label>
    </interactant>
    <organismsDiffer>false</organismsDiffer>
    <experiments>3</experiments>
</comment>
<comment type="interaction">
    <interactant intactId="EBI-10182121">
        <id>Q8NF64-2</id>
    </interactant>
    <interactant intactId="EBI-2210673">
        <id>Q16385</id>
        <label>SSX2B</label>
    </interactant>
    <organismsDiffer>false</organismsDiffer>
    <experiments>3</experiments>
</comment>
<comment type="interaction">
    <interactant intactId="EBI-10182121">
        <id>Q8NF64-2</id>
    </interactant>
    <interactant intactId="EBI-743573">
        <id>O75865</id>
        <label>TRAPPC6A</label>
    </interactant>
    <organismsDiffer>false</organismsDiffer>
    <experiments>3</experiments>
</comment>
<comment type="interaction">
    <interactant intactId="EBI-10182121">
        <id>Q8NF64-2</id>
    </interactant>
    <interactant intactId="EBI-10211777">
        <id>A0A384ME25</id>
    </interactant>
    <organismsDiffer>false</organismsDiffer>
    <experiments>3</experiments>
</comment>
<comment type="interaction">
    <interactant intactId="EBI-12011330">
        <id>Q8NF64-3</id>
    </interactant>
    <interactant intactId="EBI-12012272">
        <id>Q9UBL6-2</id>
        <label>CPNE7</label>
    </interactant>
    <organismsDiffer>false</organismsDiffer>
    <experiments>3</experiments>
</comment>
<comment type="interaction">
    <interactant intactId="EBI-12011330">
        <id>Q8NF64-3</id>
    </interactant>
    <interactant intactId="EBI-725515">
        <id>O43559</id>
        <label>FRS3</label>
    </interactant>
    <organismsDiffer>false</organismsDiffer>
    <experiments>3</experiments>
</comment>
<comment type="interaction">
    <interactant intactId="EBI-12011330">
        <id>Q8NF64-3</id>
    </interactant>
    <interactant intactId="EBI-10188645">
        <id>O75603</id>
        <label>GCM2</label>
    </interactant>
    <organismsDiffer>false</organismsDiffer>
    <experiments>3</experiments>
</comment>
<comment type="interaction">
    <interactant intactId="EBI-12011330">
        <id>Q8NF64-3</id>
    </interactant>
    <interactant intactId="EBI-714158">
        <id>Q13526</id>
        <label>PIN1</label>
    </interactant>
    <organismsDiffer>false</organismsDiffer>
    <experiments>3</experiments>
</comment>
<comment type="interaction">
    <interactant intactId="EBI-12011330">
        <id>Q8NF64-3</id>
    </interactant>
    <interactant intactId="EBI-12035119">
        <id>O75177-5</id>
        <label>SS18L1</label>
    </interactant>
    <organismsDiffer>false</organismsDiffer>
    <experiments>3</experiments>
</comment>
<comment type="subcellular location">
    <subcellularLocation>
        <location evidence="5 6">Nucleus</location>
    </subcellularLocation>
    <text>Detected at replication foci throughout S phase.</text>
</comment>
<comment type="alternative products">
    <event type="alternative splicing"/>
    <isoform>
        <id>Q8NF64-1</id>
        <name>1</name>
        <sequence type="displayed"/>
    </isoform>
    <isoform>
        <id>Q8NF64-2</id>
        <name>2</name>
        <sequence type="described" ref="VSP_012190"/>
    </isoform>
    <isoform>
        <id>Q8NF64-3</id>
        <name>3</name>
        <sequence type="described" ref="VSP_024918 VSP_012190"/>
    </isoform>
</comment>
<comment type="tissue specificity">
    <text evidence="5">Expressed most abundantly in testis with lower levels in heart, brain, pancreas, prostate and ovary.</text>
</comment>
<comment type="domain">
    <text>The C-terminal proline-rich domain possesses a significant intrinsic transcriptional activity. This activity is inhibited by the N-terminus in the full-length protein.</text>
</comment>
<comment type="sequence caution" evidence="10">
    <conflict type="erroneous initiation">
        <sequence resource="EMBL-CDS" id="AAH21924"/>
    </conflict>
</comment>
<comment type="sequence caution" evidence="10">
    <conflict type="erroneous initiation">
        <sequence resource="EMBL-CDS" id="BAC03396"/>
    </conflict>
</comment>
<comment type="sequence caution" evidence="10">
    <conflict type="erroneous initiation">
        <sequence resource="EMBL-CDS" id="CAB66507"/>
    </conflict>
</comment>
<feature type="chain" id="PRO_0000218989" description="Zinc finger MIZ domain-containing protein 2">
    <location>
        <begin position="1"/>
        <end position="920"/>
    </location>
</feature>
<feature type="zinc finger region" description="SP-RING-type" evidence="2">
    <location>
        <begin position="585"/>
        <end position="671"/>
    </location>
</feature>
<feature type="region of interest" description="Disordered" evidence="3">
    <location>
        <begin position="1"/>
        <end position="22"/>
    </location>
</feature>
<feature type="region of interest" description="Disordered" evidence="3">
    <location>
        <begin position="54"/>
        <end position="79"/>
    </location>
</feature>
<feature type="region of interest" description="Disordered" evidence="3">
    <location>
        <begin position="243"/>
        <end position="265"/>
    </location>
</feature>
<feature type="region of interest" description="Disordered" evidence="3">
    <location>
        <begin position="286"/>
        <end position="391"/>
    </location>
</feature>
<feature type="region of interest" description="Interaction with AR" evidence="5">
    <location>
        <begin position="435"/>
        <end position="506"/>
    </location>
</feature>
<feature type="region of interest" description="Disordered" evidence="3">
    <location>
        <begin position="803"/>
        <end position="920"/>
    </location>
</feature>
<feature type="compositionally biased region" description="Low complexity" evidence="3">
    <location>
        <begin position="60"/>
        <end position="79"/>
    </location>
</feature>
<feature type="compositionally biased region" description="Pro residues" evidence="3">
    <location>
        <begin position="295"/>
        <end position="304"/>
    </location>
</feature>
<feature type="compositionally biased region" description="Polar residues" evidence="3">
    <location>
        <begin position="334"/>
        <end position="354"/>
    </location>
</feature>
<feature type="compositionally biased region" description="Pro residues" evidence="3">
    <location>
        <begin position="366"/>
        <end position="379"/>
    </location>
</feature>
<feature type="compositionally biased region" description="Low complexity" evidence="3">
    <location>
        <begin position="380"/>
        <end position="389"/>
    </location>
</feature>
<feature type="compositionally biased region" description="Low complexity" evidence="3">
    <location>
        <begin position="876"/>
        <end position="890"/>
    </location>
</feature>
<feature type="compositionally biased region" description="Polar residues" evidence="3">
    <location>
        <begin position="906"/>
        <end position="920"/>
    </location>
</feature>
<feature type="binding site" evidence="2">
    <location>
        <position position="616"/>
    </location>
    <ligand>
        <name>Zn(2+)</name>
        <dbReference type="ChEBI" id="CHEBI:29105"/>
    </ligand>
</feature>
<feature type="binding site" evidence="2">
    <location>
        <position position="618"/>
    </location>
    <ligand>
        <name>Zn(2+)</name>
        <dbReference type="ChEBI" id="CHEBI:29105"/>
    </ligand>
</feature>
<feature type="binding site" evidence="2">
    <location>
        <position position="639"/>
    </location>
    <ligand>
        <name>Zn(2+)</name>
        <dbReference type="ChEBI" id="CHEBI:29105"/>
    </ligand>
</feature>
<feature type="binding site" evidence="2">
    <location>
        <position position="642"/>
    </location>
    <ligand>
        <name>Zn(2+)</name>
        <dbReference type="ChEBI" id="CHEBI:29105"/>
    </ligand>
</feature>
<feature type="modified residue" description="Omega-N-methylarginine" evidence="1">
    <location>
        <position position="111"/>
    </location>
</feature>
<feature type="modified residue" description="Asymmetric dimethylarginine" evidence="11">
    <location>
        <position position="245"/>
    </location>
</feature>
<feature type="modified residue" description="Asymmetric dimethylarginine" evidence="11">
    <location>
        <position position="262"/>
    </location>
</feature>
<feature type="cross-link" description="Glycyl lysine isopeptide (Lys-Gly) (interchain with G-Cter in SUMO2)" evidence="12 13">
    <location>
        <position position="402"/>
    </location>
</feature>
<feature type="cross-link" description="Glycyl lysine isopeptide (Lys-Gly) (interchain with G-Cter in SUMO2)" evidence="13">
    <location>
        <position position="457"/>
    </location>
</feature>
<feature type="cross-link" description="Glycyl lysine isopeptide (Lys-Gly) (interchain with G-Cter in SUMO2)" evidence="13">
    <location>
        <position position="692"/>
    </location>
</feature>
<feature type="splice variant" id="VSP_024918" description="In isoform 3." evidence="8">
    <location>
        <begin position="56"/>
        <end position="87"/>
    </location>
</feature>
<feature type="splice variant" id="VSP_012190" description="In isoform 2 and isoform 3." evidence="7 8 9">
    <location>
        <begin position="334"/>
        <end position="359"/>
    </location>
</feature>
<feature type="sequence variant" id="VAR_050536" description="In dbSNP:rs3735478." evidence="4">
    <original>L</original>
    <variation>F</variation>
    <location>
        <position position="408"/>
    </location>
</feature>
<feature type="sequence conflict" description="In Ref. 1; AAR85526." evidence="10" ref="1">
    <location>
        <position position="127"/>
    </location>
</feature>
<feature type="sequence conflict" description="In Ref. 8; CAH56269." evidence="10" ref="8">
    <original>R</original>
    <variation>RR</variation>
    <location>
        <position position="462"/>
    </location>
</feature>
<feature type="sequence conflict" description="In Ref. 1." evidence="10" ref="1">
    <location>
        <position position="568"/>
    </location>
</feature>
<feature type="sequence conflict" description="In Ref. 1, 6 and 8; CAB66507." evidence="10" ref="1 6 8">
    <original>T</original>
    <variation>M</variation>
    <location>
        <position position="765"/>
    </location>
</feature>
<feature type="sequence conflict" description="In Ref. 9." evidence="10" ref="9">
    <original>S</original>
    <variation>C</variation>
    <location>
        <position position="782"/>
    </location>
</feature>
<feature type="sequence conflict" description="In Ref. 9." evidence="10" ref="9">
    <original>A</original>
    <variation>V</variation>
    <location>
        <position position="799"/>
    </location>
</feature>
<organism>
    <name type="scientific">Homo sapiens</name>
    <name type="common">Human</name>
    <dbReference type="NCBI Taxonomy" id="9606"/>
    <lineage>
        <taxon>Eukaryota</taxon>
        <taxon>Metazoa</taxon>
        <taxon>Chordata</taxon>
        <taxon>Craniata</taxon>
        <taxon>Vertebrata</taxon>
        <taxon>Euteleostomi</taxon>
        <taxon>Mammalia</taxon>
        <taxon>Eutheria</taxon>
        <taxon>Euarchontoglires</taxon>
        <taxon>Primates</taxon>
        <taxon>Haplorrhini</taxon>
        <taxon>Catarrhini</taxon>
        <taxon>Hominidae</taxon>
        <taxon>Homo</taxon>
    </lineage>
</organism>
<evidence type="ECO:0000250" key="1">
    <source>
        <dbReference type="UniProtKB" id="Q8CIE2"/>
    </source>
</evidence>
<evidence type="ECO:0000255" key="2">
    <source>
        <dbReference type="PROSITE-ProRule" id="PRU00452"/>
    </source>
</evidence>
<evidence type="ECO:0000256" key="3">
    <source>
        <dbReference type="SAM" id="MobiDB-lite"/>
    </source>
</evidence>
<evidence type="ECO:0000269" key="4">
    <source>
    </source>
</evidence>
<evidence type="ECO:0000269" key="5">
    <source>
    </source>
</evidence>
<evidence type="ECO:0000269" key="6">
    <source>
    </source>
</evidence>
<evidence type="ECO:0000303" key="7">
    <source>
    </source>
</evidence>
<evidence type="ECO:0000303" key="8">
    <source>
    </source>
</evidence>
<evidence type="ECO:0000303" key="9">
    <source>
    </source>
</evidence>
<evidence type="ECO:0000305" key="10"/>
<evidence type="ECO:0007744" key="11">
    <source>
    </source>
</evidence>
<evidence type="ECO:0007744" key="12">
    <source>
    </source>
</evidence>
<evidence type="ECO:0007744" key="13">
    <source>
    </source>
</evidence>
<sequence length="920" mass="96537">MNSMNPMKPALPPAPHGDGSFAYESVPWQQSATQPAGSLSVVTTVWGVGNATQSQVLGNPMGPAGSPSGSSMMPGVAGGSSALTSPQCLGQQAFAEGGANKGYVQQGVYSRGGYPGAPGFTTGYAGGPGGLGLPSHAARPSTDFTQAAAAAAVAAAAATATATATATVAALQEKQSQELSQYGAMGAGQSFNSQFLQHGGPRGPSVPAGMNPTGIGGVMGPSGLSPLAMNPTRAAGMTPLYAGQRLPQHGYPGPPQAQPLPRQGVKRTYSEVYPGQQYLQGGQYAPSTAQFAPSPGQPPAPSPSYPGHRLPLQQGMTQSLSVPGPTGLHYKPTEQFNGQGASFNGGSVSYSQPGLSGPTRSIPGYPSSPLPGNPTPPMTPSSSVPYMSPNQEVKSPFLPDLKPNLNSLHSSPSGSGPCDELRLTFPVRDGVVLEPFRLQHNLAVSNHVFQLRDSVYKTLIMRPDLELQFKCYHHEDRQMNTNWPASVQVSVNATPLTIERGDNKTSHKPLYLKHVCQPGRNTIQITVTACCCSHLFVLQLVHRPSVRSVLQGLLKKRLLPAEHCITKIKRNFSSGTIPGTPGPNGEDGVEQTAIKVSLKCPITFRRIQLPARGHDCRHIQCFDLESYLQLNCERGTWRCPVCNKTALLEGLEVDQYMLGILIYIQNSDYEEITIDPTCSWKPVPVKPDMHIKEEPDGPALKRCRTVSPAHVLMPSVMEMIAALGPGAAPFAPLQPPSVPAPSDYPGQGSSFLGPGTFPESFPPTTPSTPTLAEFTPGPPPISYQSDIPSSLLTSEKSTACLPSQMAPAGHLDPTHNPGTPGLHTSNLGAPPGPQLHHSNPPPASRQSLGQASLGPTGELAFSPATGVMGPPSMSGAGEAPEPALDLLPELTNPDELLSYLGPPDLPTNNNDDLLSLFENN</sequence>
<dbReference type="EMBL" id="AY426594">
    <property type="protein sequence ID" value="AAR85526.1"/>
    <property type="molecule type" value="mRNA"/>
</dbReference>
<dbReference type="EMBL" id="AK090415">
    <property type="protein sequence ID" value="BAC03396.1"/>
    <property type="status" value="ALT_INIT"/>
    <property type="molecule type" value="mRNA"/>
</dbReference>
<dbReference type="EMBL" id="AC004859">
    <property type="status" value="NOT_ANNOTATED_CDS"/>
    <property type="molecule type" value="Genomic_DNA"/>
</dbReference>
<dbReference type="EMBL" id="AC013436">
    <property type="protein sequence ID" value="AAP22368.1"/>
    <property type="status" value="ALT_SEQ"/>
    <property type="molecule type" value="Genomic_DNA"/>
</dbReference>
<dbReference type="EMBL" id="CH236960">
    <property type="protein sequence ID" value="EAL23750.1"/>
    <property type="molecule type" value="Genomic_DNA"/>
</dbReference>
<dbReference type="EMBL" id="CH471128">
    <property type="protein sequence ID" value="EAW61083.1"/>
    <property type="molecule type" value="Genomic_DNA"/>
</dbReference>
<dbReference type="EMBL" id="CH471128">
    <property type="protein sequence ID" value="EAW61084.1"/>
    <property type="molecule type" value="Genomic_DNA"/>
</dbReference>
<dbReference type="EMBL" id="CH471128">
    <property type="protein sequence ID" value="EAW61085.1"/>
    <property type="molecule type" value="Genomic_DNA"/>
</dbReference>
<dbReference type="EMBL" id="BC021924">
    <property type="protein sequence ID" value="AAH21924.1"/>
    <property type="status" value="ALT_INIT"/>
    <property type="molecule type" value="mRNA"/>
</dbReference>
<dbReference type="EMBL" id="BC110435">
    <property type="protein sequence ID" value="AAI10436.1"/>
    <property type="molecule type" value="mRNA"/>
</dbReference>
<dbReference type="EMBL" id="AB067473">
    <property type="protein sequence ID" value="BAB67779.1"/>
    <property type="molecule type" value="mRNA"/>
</dbReference>
<dbReference type="EMBL" id="AL831933">
    <property type="protein sequence ID" value="CAH56269.1"/>
    <property type="molecule type" value="mRNA"/>
</dbReference>
<dbReference type="EMBL" id="AL136572">
    <property type="protein sequence ID" value="CAB66507.1"/>
    <property type="status" value="ALT_INIT"/>
    <property type="molecule type" value="mRNA"/>
</dbReference>
<dbReference type="EMBL" id="AB015330">
    <property type="protein sequence ID" value="BAA34789.1"/>
    <property type="molecule type" value="mRNA"/>
</dbReference>
<dbReference type="CCDS" id="CCDS43576.1">
    <molecule id="Q8NF64-1"/>
</dbReference>
<dbReference type="CCDS" id="CCDS43577.1">
    <molecule id="Q8NF64-2"/>
</dbReference>
<dbReference type="CCDS" id="CCDS75591.1">
    <molecule id="Q8NF64-3"/>
</dbReference>
<dbReference type="RefSeq" id="NP_001287888.1">
    <molecule id="Q8NF64-3"/>
    <property type="nucleotide sequence ID" value="NM_001300959.2"/>
</dbReference>
<dbReference type="RefSeq" id="NP_113637.3">
    <molecule id="Q8NF64-1"/>
    <property type="nucleotide sequence ID" value="NM_031449.3"/>
</dbReference>
<dbReference type="RefSeq" id="NP_777589.2">
    <molecule id="Q8NF64-2"/>
    <property type="nucleotide sequence ID" value="NM_174929.2"/>
</dbReference>
<dbReference type="RefSeq" id="XP_005249926.1">
    <molecule id="Q8NF64-1"/>
    <property type="nucleotide sequence ID" value="XM_005249869.3"/>
</dbReference>
<dbReference type="RefSeq" id="XP_005249929.1">
    <molecule id="Q8NF64-2"/>
    <property type="nucleotide sequence ID" value="XM_005249872.3"/>
</dbReference>
<dbReference type="RefSeq" id="XP_047276851.1">
    <molecule id="Q8NF64-1"/>
    <property type="nucleotide sequence ID" value="XM_047420895.1"/>
</dbReference>
<dbReference type="RefSeq" id="XP_047276852.1">
    <molecule id="Q8NF64-1"/>
    <property type="nucleotide sequence ID" value="XM_047420896.1"/>
</dbReference>
<dbReference type="RefSeq" id="XP_047276855.1">
    <molecule id="Q8NF64-2"/>
    <property type="nucleotide sequence ID" value="XM_047420899.1"/>
</dbReference>
<dbReference type="RefSeq" id="XP_047276856.1">
    <molecule id="Q8NF64-2"/>
    <property type="nucleotide sequence ID" value="XM_047420900.1"/>
</dbReference>
<dbReference type="RefSeq" id="XP_047276858.1">
    <molecule id="Q8NF64-2"/>
    <property type="nucleotide sequence ID" value="XM_047420902.1"/>
</dbReference>
<dbReference type="RefSeq" id="XP_047276862.1">
    <molecule id="Q8NF64-3"/>
    <property type="nucleotide sequence ID" value="XM_047420906.1"/>
</dbReference>
<dbReference type="RefSeq" id="XP_047276863.1">
    <molecule id="Q8NF64-3"/>
    <property type="nucleotide sequence ID" value="XM_047420907.1"/>
</dbReference>
<dbReference type="RefSeq" id="XP_054215101.1">
    <molecule id="Q8NF64-1"/>
    <property type="nucleotide sequence ID" value="XM_054359126.1"/>
</dbReference>
<dbReference type="RefSeq" id="XP_054215102.1">
    <molecule id="Q8NF64-1"/>
    <property type="nucleotide sequence ID" value="XM_054359127.1"/>
</dbReference>
<dbReference type="RefSeq" id="XP_054215103.1">
    <molecule id="Q8NF64-1"/>
    <property type="nucleotide sequence ID" value="XM_054359128.1"/>
</dbReference>
<dbReference type="RefSeq" id="XP_054215108.1">
    <molecule id="Q8NF64-2"/>
    <property type="nucleotide sequence ID" value="XM_054359133.1"/>
</dbReference>
<dbReference type="RefSeq" id="XP_054215109.1">
    <molecule id="Q8NF64-2"/>
    <property type="nucleotide sequence ID" value="XM_054359134.1"/>
</dbReference>
<dbReference type="RefSeq" id="XP_054215110.1">
    <molecule id="Q8NF64-2"/>
    <property type="nucleotide sequence ID" value="XM_054359135.1"/>
</dbReference>
<dbReference type="RefSeq" id="XP_054215111.1">
    <molecule id="Q8NF64-2"/>
    <property type="nucleotide sequence ID" value="XM_054359136.1"/>
</dbReference>
<dbReference type="RefSeq" id="XP_054215116.1">
    <molecule id="Q8NF64-3"/>
    <property type="nucleotide sequence ID" value="XM_054359141.1"/>
</dbReference>
<dbReference type="RefSeq" id="XP_054215117.1">
    <molecule id="Q8NF64-3"/>
    <property type="nucleotide sequence ID" value="XM_054359142.1"/>
</dbReference>
<dbReference type="SMR" id="Q8NF64"/>
<dbReference type="BioGRID" id="123701">
    <property type="interactions" value="60"/>
</dbReference>
<dbReference type="FunCoup" id="Q8NF64">
    <property type="interactions" value="2223"/>
</dbReference>
<dbReference type="IntAct" id="Q8NF64">
    <property type="interactions" value="36"/>
</dbReference>
<dbReference type="MINT" id="Q8NF64"/>
<dbReference type="STRING" id="9606.ENSP00000311778"/>
<dbReference type="GlyGen" id="Q8NF64">
    <property type="glycosylation" value="5 sites, 1 O-linked glycan (3 sites)"/>
</dbReference>
<dbReference type="iPTMnet" id="Q8NF64"/>
<dbReference type="PhosphoSitePlus" id="Q8NF64"/>
<dbReference type="BioMuta" id="ZMIZ2"/>
<dbReference type="DMDM" id="56404909"/>
<dbReference type="jPOST" id="Q8NF64"/>
<dbReference type="MassIVE" id="Q8NF64"/>
<dbReference type="PaxDb" id="9606-ENSP00000311778"/>
<dbReference type="PeptideAtlas" id="Q8NF64"/>
<dbReference type="ProteomicsDB" id="73263">
    <molecule id="Q8NF64-1"/>
</dbReference>
<dbReference type="ProteomicsDB" id="73264">
    <molecule id="Q8NF64-2"/>
</dbReference>
<dbReference type="ProteomicsDB" id="73265">
    <molecule id="Q8NF64-3"/>
</dbReference>
<dbReference type="Pumba" id="Q8NF64"/>
<dbReference type="Antibodypedia" id="27318">
    <property type="antibodies" value="102 antibodies from 24 providers"/>
</dbReference>
<dbReference type="DNASU" id="83637"/>
<dbReference type="Ensembl" id="ENST00000265346.11">
    <molecule id="Q8NF64-2"/>
    <property type="protein sequence ID" value="ENSP00000265346.7"/>
    <property type="gene ID" value="ENSG00000122515.16"/>
</dbReference>
<dbReference type="Ensembl" id="ENST00000309315.9">
    <molecule id="Q8NF64-1"/>
    <property type="protein sequence ID" value="ENSP00000311778.4"/>
    <property type="gene ID" value="ENSG00000122515.16"/>
</dbReference>
<dbReference type="Ensembl" id="ENST00000413916.5">
    <molecule id="Q8NF64-3"/>
    <property type="protein sequence ID" value="ENSP00000409648.1"/>
    <property type="gene ID" value="ENSG00000122515.16"/>
</dbReference>
<dbReference type="Ensembl" id="ENST00000441627.5">
    <molecule id="Q8NF64-1"/>
    <property type="protein sequence ID" value="ENSP00000414723.1"/>
    <property type="gene ID" value="ENSG00000122515.16"/>
</dbReference>
<dbReference type="GeneID" id="83637"/>
<dbReference type="KEGG" id="hsa:83637"/>
<dbReference type="MANE-Select" id="ENST00000309315.9">
    <property type="protein sequence ID" value="ENSP00000311778.4"/>
    <property type="RefSeq nucleotide sequence ID" value="NM_031449.4"/>
    <property type="RefSeq protein sequence ID" value="NP_113637.3"/>
</dbReference>
<dbReference type="UCSC" id="uc003tlq.4">
    <molecule id="Q8NF64-1"/>
    <property type="organism name" value="human"/>
</dbReference>
<dbReference type="AGR" id="HGNC:22229"/>
<dbReference type="CTD" id="83637"/>
<dbReference type="DisGeNET" id="83637"/>
<dbReference type="GeneCards" id="ZMIZ2"/>
<dbReference type="HGNC" id="HGNC:22229">
    <property type="gene designation" value="ZMIZ2"/>
</dbReference>
<dbReference type="HPA" id="ENSG00000122515">
    <property type="expression patterns" value="Low tissue specificity"/>
</dbReference>
<dbReference type="MIM" id="611196">
    <property type="type" value="gene"/>
</dbReference>
<dbReference type="neXtProt" id="NX_Q8NF64"/>
<dbReference type="OpenTargets" id="ENSG00000122515"/>
<dbReference type="PharmGKB" id="PA162409851"/>
<dbReference type="VEuPathDB" id="HostDB:ENSG00000122515"/>
<dbReference type="eggNOG" id="KOG2169">
    <property type="taxonomic scope" value="Eukaryota"/>
</dbReference>
<dbReference type="GeneTree" id="ENSGT01030000234539"/>
<dbReference type="HOGENOM" id="CLU_009461_1_0_1"/>
<dbReference type="InParanoid" id="Q8NF64"/>
<dbReference type="OrthoDB" id="27975at2759"/>
<dbReference type="PAN-GO" id="Q8NF64">
    <property type="GO annotations" value="2 GO annotations based on evolutionary models"/>
</dbReference>
<dbReference type="PhylomeDB" id="Q8NF64"/>
<dbReference type="TreeFam" id="TF316952"/>
<dbReference type="PathwayCommons" id="Q8NF64"/>
<dbReference type="SignaLink" id="Q8NF64"/>
<dbReference type="BioGRID-ORCS" id="83637">
    <property type="hits" value="14 hits in 1176 CRISPR screens"/>
</dbReference>
<dbReference type="ChiTaRS" id="ZMIZ2">
    <property type="organism name" value="human"/>
</dbReference>
<dbReference type="GeneWiki" id="ZMIZ2"/>
<dbReference type="GenomeRNAi" id="83637"/>
<dbReference type="Pharos" id="Q8NF64">
    <property type="development level" value="Tbio"/>
</dbReference>
<dbReference type="PRO" id="PR:Q8NF64"/>
<dbReference type="Proteomes" id="UP000005640">
    <property type="component" value="Chromosome 7"/>
</dbReference>
<dbReference type="RNAct" id="Q8NF64">
    <property type="molecule type" value="protein"/>
</dbReference>
<dbReference type="Bgee" id="ENSG00000122515">
    <property type="expression patterns" value="Expressed in endothelial cell and 197 other cell types or tissues"/>
</dbReference>
<dbReference type="ExpressionAtlas" id="Q8NF64">
    <property type="expression patterns" value="baseline and differential"/>
</dbReference>
<dbReference type="GO" id="GO:0000785">
    <property type="term" value="C:chromatin"/>
    <property type="evidence" value="ECO:0000318"/>
    <property type="project" value="GO_Central"/>
</dbReference>
<dbReference type="GO" id="GO:0005739">
    <property type="term" value="C:mitochondrion"/>
    <property type="evidence" value="ECO:0000314"/>
    <property type="project" value="HPA"/>
</dbReference>
<dbReference type="GO" id="GO:0043596">
    <property type="term" value="C:nuclear replication fork"/>
    <property type="evidence" value="ECO:0000314"/>
    <property type="project" value="UniProtKB"/>
</dbReference>
<dbReference type="GO" id="GO:0005654">
    <property type="term" value="C:nucleoplasm"/>
    <property type="evidence" value="ECO:0000314"/>
    <property type="project" value="HPA"/>
</dbReference>
<dbReference type="GO" id="GO:0005634">
    <property type="term" value="C:nucleus"/>
    <property type="evidence" value="ECO:0000314"/>
    <property type="project" value="UniProtKB"/>
</dbReference>
<dbReference type="GO" id="GO:0061665">
    <property type="term" value="F:SUMO ligase activity"/>
    <property type="evidence" value="ECO:0000318"/>
    <property type="project" value="GO_Central"/>
</dbReference>
<dbReference type="GO" id="GO:0003713">
    <property type="term" value="F:transcription coactivator activity"/>
    <property type="evidence" value="ECO:0000314"/>
    <property type="project" value="UniProtKB"/>
</dbReference>
<dbReference type="GO" id="GO:0008270">
    <property type="term" value="F:zinc ion binding"/>
    <property type="evidence" value="ECO:0007669"/>
    <property type="project" value="UniProtKB-KW"/>
</dbReference>
<dbReference type="GO" id="GO:0045944">
    <property type="term" value="P:positive regulation of transcription by RNA polymerase II"/>
    <property type="evidence" value="ECO:0000314"/>
    <property type="project" value="UniProtKB"/>
</dbReference>
<dbReference type="GO" id="GO:0016925">
    <property type="term" value="P:protein sumoylation"/>
    <property type="evidence" value="ECO:0000318"/>
    <property type="project" value="GO_Central"/>
</dbReference>
<dbReference type="GO" id="GO:0006357">
    <property type="term" value="P:regulation of transcription by RNA polymerase II"/>
    <property type="evidence" value="ECO:0000318"/>
    <property type="project" value="GO_Central"/>
</dbReference>
<dbReference type="FunFam" id="3.30.40.10:FF:000012">
    <property type="entry name" value="Zinc finger MIZ domain-containing protein 2"/>
    <property type="match status" value="1"/>
</dbReference>
<dbReference type="Gene3D" id="3.30.40.10">
    <property type="entry name" value="Zinc/RING finger domain, C3HC4 (zinc finger)"/>
    <property type="match status" value="1"/>
</dbReference>
<dbReference type="InterPro" id="IPR004181">
    <property type="entry name" value="Znf_MIZ"/>
</dbReference>
<dbReference type="InterPro" id="IPR013083">
    <property type="entry name" value="Znf_RING/FYVE/PHD"/>
</dbReference>
<dbReference type="PANTHER" id="PTHR10782">
    <property type="entry name" value="ZINC FINGER MIZ DOMAIN-CONTAINING PROTEIN"/>
    <property type="match status" value="1"/>
</dbReference>
<dbReference type="PANTHER" id="PTHR10782:SF38">
    <property type="entry name" value="ZINC FINGER MIZ DOMAIN-CONTAINING PROTEIN 2"/>
    <property type="match status" value="1"/>
</dbReference>
<dbReference type="Pfam" id="PF02891">
    <property type="entry name" value="zf-MIZ"/>
    <property type="match status" value="1"/>
</dbReference>
<dbReference type="PROSITE" id="PS51044">
    <property type="entry name" value="ZF_SP_RING"/>
    <property type="match status" value="1"/>
</dbReference>
<gene>
    <name type="primary">ZMIZ2</name>
    <name type="synonym">KIAA1886</name>
    <name type="synonym">ZIMP7</name>
    <name type="ORF">HRIHFB2007</name>
</gene>
<name>ZMIZ2_HUMAN</name>
<protein>
    <recommendedName>
        <fullName>Zinc finger MIZ domain-containing protein 2</fullName>
    </recommendedName>
    <alternativeName>
        <fullName>PIAS-like protein Zimp7</fullName>
    </alternativeName>
</protein>
<reference key="1">
    <citation type="journal article" date="2005" name="Mol. Endocrinol.">
        <title>hZimp7, a novel PIAS-like protein, enhances androgen receptor-mediated transcription and interacts with SWI/SNF-like BAF complexes.</title>
        <authorList>
            <person name="Huang C.-Y."/>
            <person name="Beliakoff J."/>
            <person name="Li X."/>
            <person name="Lee J."/>
            <person name="Li X."/>
            <person name="Sharma M."/>
            <person name="Lim B."/>
            <person name="Sun Z."/>
        </authorList>
    </citation>
    <scope>NUCLEOTIDE SEQUENCE [MRNA] (ISOFORM 2)</scope>
    <scope>FUNCTION</scope>
    <scope>INTERACTION WITH AR; SMARCA4 AND SMARCE1</scope>
    <scope>SUBCELLULAR LOCATION</scope>
    <scope>TISSUE SPECIFICITY</scope>
</reference>
<reference key="2">
    <citation type="journal article" date="2004" name="Nat. Genet.">
        <title>Complete sequencing and characterization of 21,243 full-length human cDNAs.</title>
        <authorList>
            <person name="Ota T."/>
            <person name="Suzuki Y."/>
            <person name="Nishikawa T."/>
            <person name="Otsuki T."/>
            <person name="Sugiyama T."/>
            <person name="Irie R."/>
            <person name="Wakamatsu A."/>
            <person name="Hayashi K."/>
            <person name="Sato H."/>
            <person name="Nagai K."/>
            <person name="Kimura K."/>
            <person name="Makita H."/>
            <person name="Sekine M."/>
            <person name="Obayashi M."/>
            <person name="Nishi T."/>
            <person name="Shibahara T."/>
            <person name="Tanaka T."/>
            <person name="Ishii S."/>
            <person name="Yamamoto J."/>
            <person name="Saito K."/>
            <person name="Kawai Y."/>
            <person name="Isono Y."/>
            <person name="Nakamura Y."/>
            <person name="Nagahari K."/>
            <person name="Murakami K."/>
            <person name="Yasuda T."/>
            <person name="Iwayanagi T."/>
            <person name="Wagatsuma M."/>
            <person name="Shiratori A."/>
            <person name="Sudo H."/>
            <person name="Hosoiri T."/>
            <person name="Kaku Y."/>
            <person name="Kodaira H."/>
            <person name="Kondo H."/>
            <person name="Sugawara M."/>
            <person name="Takahashi M."/>
            <person name="Kanda K."/>
            <person name="Yokoi T."/>
            <person name="Furuya T."/>
            <person name="Kikkawa E."/>
            <person name="Omura Y."/>
            <person name="Abe K."/>
            <person name="Kamihara K."/>
            <person name="Katsuta N."/>
            <person name="Sato K."/>
            <person name="Tanikawa M."/>
            <person name="Yamazaki M."/>
            <person name="Ninomiya K."/>
            <person name="Ishibashi T."/>
            <person name="Yamashita H."/>
            <person name="Murakawa K."/>
            <person name="Fujimori K."/>
            <person name="Tanai H."/>
            <person name="Kimata M."/>
            <person name="Watanabe M."/>
            <person name="Hiraoka S."/>
            <person name="Chiba Y."/>
            <person name="Ishida S."/>
            <person name="Ono Y."/>
            <person name="Takiguchi S."/>
            <person name="Watanabe S."/>
            <person name="Yosida M."/>
            <person name="Hotuta T."/>
            <person name="Kusano J."/>
            <person name="Kanehori K."/>
            <person name="Takahashi-Fujii A."/>
            <person name="Hara H."/>
            <person name="Tanase T.-O."/>
            <person name="Nomura Y."/>
            <person name="Togiya S."/>
            <person name="Komai F."/>
            <person name="Hara R."/>
            <person name="Takeuchi K."/>
            <person name="Arita M."/>
            <person name="Imose N."/>
            <person name="Musashino K."/>
            <person name="Yuuki H."/>
            <person name="Oshima A."/>
            <person name="Sasaki N."/>
            <person name="Aotsuka S."/>
            <person name="Yoshikawa Y."/>
            <person name="Matsunawa H."/>
            <person name="Ichihara T."/>
            <person name="Shiohata N."/>
            <person name="Sano S."/>
            <person name="Moriya S."/>
            <person name="Momiyama H."/>
            <person name="Satoh N."/>
            <person name="Takami S."/>
            <person name="Terashima Y."/>
            <person name="Suzuki O."/>
            <person name="Nakagawa S."/>
            <person name="Senoh A."/>
            <person name="Mizoguchi H."/>
            <person name="Goto Y."/>
            <person name="Shimizu F."/>
            <person name="Wakebe H."/>
            <person name="Hishigaki H."/>
            <person name="Watanabe T."/>
            <person name="Sugiyama A."/>
            <person name="Takemoto M."/>
            <person name="Kawakami B."/>
            <person name="Yamazaki M."/>
            <person name="Watanabe K."/>
            <person name="Kumagai A."/>
            <person name="Itakura S."/>
            <person name="Fukuzumi Y."/>
            <person name="Fujimori Y."/>
            <person name="Komiyama M."/>
            <person name="Tashiro H."/>
            <person name="Tanigami A."/>
            <person name="Fujiwara T."/>
            <person name="Ono T."/>
            <person name="Yamada K."/>
            <person name="Fujii Y."/>
            <person name="Ozaki K."/>
            <person name="Hirao M."/>
            <person name="Ohmori Y."/>
            <person name="Kawabata A."/>
            <person name="Hikiji T."/>
            <person name="Kobatake N."/>
            <person name="Inagaki H."/>
            <person name="Ikema Y."/>
            <person name="Okamoto S."/>
            <person name="Okitani R."/>
            <person name="Kawakami T."/>
            <person name="Noguchi S."/>
            <person name="Itoh T."/>
            <person name="Shigeta K."/>
            <person name="Senba T."/>
            <person name="Matsumura K."/>
            <person name="Nakajima Y."/>
            <person name="Mizuno T."/>
            <person name="Morinaga M."/>
            <person name="Sasaki M."/>
            <person name="Togashi T."/>
            <person name="Oyama M."/>
            <person name="Hata H."/>
            <person name="Watanabe M."/>
            <person name="Komatsu T."/>
            <person name="Mizushima-Sugano J."/>
            <person name="Satoh T."/>
            <person name="Shirai Y."/>
            <person name="Takahashi Y."/>
            <person name="Nakagawa K."/>
            <person name="Okumura K."/>
            <person name="Nagase T."/>
            <person name="Nomura N."/>
            <person name="Kikuchi H."/>
            <person name="Masuho Y."/>
            <person name="Yamashita R."/>
            <person name="Nakai K."/>
            <person name="Yada T."/>
            <person name="Nakamura Y."/>
            <person name="Ohara O."/>
            <person name="Isogai T."/>
            <person name="Sugano S."/>
        </authorList>
    </citation>
    <scope>NUCLEOTIDE SEQUENCE [LARGE SCALE MRNA] (ISOFORM 1)</scope>
    <scope>VARIANT PHE-408</scope>
    <source>
        <tissue>Spleen</tissue>
    </source>
</reference>
<reference key="3">
    <citation type="journal article" date="2003" name="Science">
        <title>Human chromosome 7: DNA sequence and biology.</title>
        <authorList>
            <person name="Scherer S.W."/>
            <person name="Cheung J."/>
            <person name="MacDonald J.R."/>
            <person name="Osborne L.R."/>
            <person name="Nakabayashi K."/>
            <person name="Herbrick J.-A."/>
            <person name="Carson A.R."/>
            <person name="Parker-Katiraee L."/>
            <person name="Skaug J."/>
            <person name="Khaja R."/>
            <person name="Zhang J."/>
            <person name="Hudek A.K."/>
            <person name="Li M."/>
            <person name="Haddad M."/>
            <person name="Duggan G.E."/>
            <person name="Fernandez B.A."/>
            <person name="Kanematsu E."/>
            <person name="Gentles S."/>
            <person name="Christopoulos C.C."/>
            <person name="Choufani S."/>
            <person name="Kwasnicka D."/>
            <person name="Zheng X.H."/>
            <person name="Lai Z."/>
            <person name="Nusskern D.R."/>
            <person name="Zhang Q."/>
            <person name="Gu Z."/>
            <person name="Lu F."/>
            <person name="Zeesman S."/>
            <person name="Nowaczyk M.J."/>
            <person name="Teshima I."/>
            <person name="Chitayat D."/>
            <person name="Shuman C."/>
            <person name="Weksberg R."/>
            <person name="Zackai E.H."/>
            <person name="Grebe T.A."/>
            <person name="Cox S.R."/>
            <person name="Kirkpatrick S.J."/>
            <person name="Rahman N."/>
            <person name="Friedman J.M."/>
            <person name="Heng H.H.Q."/>
            <person name="Pelicci P.G."/>
            <person name="Lo-Coco F."/>
            <person name="Belloni E."/>
            <person name="Shaffer L.G."/>
            <person name="Pober B."/>
            <person name="Morton C.C."/>
            <person name="Gusella J.F."/>
            <person name="Bruns G.A.P."/>
            <person name="Korf B.R."/>
            <person name="Quade B.J."/>
            <person name="Ligon A.H."/>
            <person name="Ferguson H."/>
            <person name="Higgins A.W."/>
            <person name="Leach N.T."/>
            <person name="Herrick S.R."/>
            <person name="Lemyre E."/>
            <person name="Farra C.G."/>
            <person name="Kim H.-G."/>
            <person name="Summers A.M."/>
            <person name="Gripp K.W."/>
            <person name="Roberts W."/>
            <person name="Szatmari P."/>
            <person name="Winsor E.J.T."/>
            <person name="Grzeschik K.-H."/>
            <person name="Teebi A."/>
            <person name="Minassian B.A."/>
            <person name="Kere J."/>
            <person name="Armengol L."/>
            <person name="Pujana M.A."/>
            <person name="Estivill X."/>
            <person name="Wilson M.D."/>
            <person name="Koop B.F."/>
            <person name="Tosi S."/>
            <person name="Moore G.E."/>
            <person name="Boright A.P."/>
            <person name="Zlotorynski E."/>
            <person name="Kerem B."/>
            <person name="Kroisel P.M."/>
            <person name="Petek E."/>
            <person name="Oscier D.G."/>
            <person name="Mould S.J."/>
            <person name="Doehner H."/>
            <person name="Doehner K."/>
            <person name="Rommens J.M."/>
            <person name="Vincent J.B."/>
            <person name="Venter J.C."/>
            <person name="Li P.W."/>
            <person name="Mural R.J."/>
            <person name="Adams M.D."/>
            <person name="Tsui L.-C."/>
        </authorList>
    </citation>
    <scope>NUCLEOTIDE SEQUENCE [LARGE SCALE GENOMIC DNA]</scope>
</reference>
<reference key="4">
    <citation type="submission" date="2005-09" db="EMBL/GenBank/DDBJ databases">
        <authorList>
            <person name="Mural R.J."/>
            <person name="Istrail S."/>
            <person name="Sutton G.G."/>
            <person name="Florea L."/>
            <person name="Halpern A.L."/>
            <person name="Mobarry C.M."/>
            <person name="Lippert R."/>
            <person name="Walenz B."/>
            <person name="Shatkay H."/>
            <person name="Dew I."/>
            <person name="Miller J.R."/>
            <person name="Flanigan M.J."/>
            <person name="Edwards N.J."/>
            <person name="Bolanos R."/>
            <person name="Fasulo D."/>
            <person name="Halldorsson B.V."/>
            <person name="Hannenhalli S."/>
            <person name="Turner R."/>
            <person name="Yooseph S."/>
            <person name="Lu F."/>
            <person name="Nusskern D.R."/>
            <person name="Shue B.C."/>
            <person name="Zheng X.H."/>
            <person name="Zhong F."/>
            <person name="Delcher A.L."/>
            <person name="Huson D.H."/>
            <person name="Kravitz S.A."/>
            <person name="Mouchard L."/>
            <person name="Reinert K."/>
            <person name="Remington K.A."/>
            <person name="Clark A.G."/>
            <person name="Waterman M.S."/>
            <person name="Eichler E.E."/>
            <person name="Adams M.D."/>
            <person name="Hunkapiller M.W."/>
            <person name="Myers E.W."/>
            <person name="Venter J.C."/>
        </authorList>
    </citation>
    <scope>NUCLEOTIDE SEQUENCE [LARGE SCALE GENOMIC DNA]</scope>
</reference>
<reference key="5">
    <citation type="journal article" date="2003" name="Nature">
        <title>The DNA sequence of human chromosome 7.</title>
        <authorList>
            <person name="Hillier L.W."/>
            <person name="Fulton R.S."/>
            <person name="Fulton L.A."/>
            <person name="Graves T.A."/>
            <person name="Pepin K.H."/>
            <person name="Wagner-McPherson C."/>
            <person name="Layman D."/>
            <person name="Maas J."/>
            <person name="Jaeger S."/>
            <person name="Walker R."/>
            <person name="Wylie K."/>
            <person name="Sekhon M."/>
            <person name="Becker M.C."/>
            <person name="O'Laughlin M.D."/>
            <person name="Schaller M.E."/>
            <person name="Fewell G.A."/>
            <person name="Delehaunty K.D."/>
            <person name="Miner T.L."/>
            <person name="Nash W.E."/>
            <person name="Cordes M."/>
            <person name="Du H."/>
            <person name="Sun H."/>
            <person name="Edwards J."/>
            <person name="Bradshaw-Cordum H."/>
            <person name="Ali J."/>
            <person name="Andrews S."/>
            <person name="Isak A."/>
            <person name="Vanbrunt A."/>
            <person name="Nguyen C."/>
            <person name="Du F."/>
            <person name="Lamar B."/>
            <person name="Courtney L."/>
            <person name="Kalicki J."/>
            <person name="Ozersky P."/>
            <person name="Bielicki L."/>
            <person name="Scott K."/>
            <person name="Holmes A."/>
            <person name="Harkins R."/>
            <person name="Harris A."/>
            <person name="Strong C.M."/>
            <person name="Hou S."/>
            <person name="Tomlinson C."/>
            <person name="Dauphin-Kohlberg S."/>
            <person name="Kozlowicz-Reilly A."/>
            <person name="Leonard S."/>
            <person name="Rohlfing T."/>
            <person name="Rock S.M."/>
            <person name="Tin-Wollam A.-M."/>
            <person name="Abbott A."/>
            <person name="Minx P."/>
            <person name="Maupin R."/>
            <person name="Strowmatt C."/>
            <person name="Latreille P."/>
            <person name="Miller N."/>
            <person name="Johnson D."/>
            <person name="Murray J."/>
            <person name="Woessner J.P."/>
            <person name="Wendl M.C."/>
            <person name="Yang S.-P."/>
            <person name="Schultz B.R."/>
            <person name="Wallis J.W."/>
            <person name="Spieth J."/>
            <person name="Bieri T.A."/>
            <person name="Nelson J.O."/>
            <person name="Berkowicz N."/>
            <person name="Wohldmann P.E."/>
            <person name="Cook L.L."/>
            <person name="Hickenbotham M.T."/>
            <person name="Eldred J."/>
            <person name="Williams D."/>
            <person name="Bedell J.A."/>
            <person name="Mardis E.R."/>
            <person name="Clifton S.W."/>
            <person name="Chissoe S.L."/>
            <person name="Marra M.A."/>
            <person name="Raymond C."/>
            <person name="Haugen E."/>
            <person name="Gillett W."/>
            <person name="Zhou Y."/>
            <person name="James R."/>
            <person name="Phelps K."/>
            <person name="Iadanoto S."/>
            <person name="Bubb K."/>
            <person name="Simms E."/>
            <person name="Levy R."/>
            <person name="Clendenning J."/>
            <person name="Kaul R."/>
            <person name="Kent W.J."/>
            <person name="Furey T.S."/>
            <person name="Baertsch R.A."/>
            <person name="Brent M.R."/>
            <person name="Keibler E."/>
            <person name="Flicek P."/>
            <person name="Bork P."/>
            <person name="Suyama M."/>
            <person name="Bailey J.A."/>
            <person name="Portnoy M.E."/>
            <person name="Torrents D."/>
            <person name="Chinwalla A.T."/>
            <person name="Gish W.R."/>
            <person name="Eddy S.R."/>
            <person name="McPherson J.D."/>
            <person name="Olson M.V."/>
            <person name="Eichler E.E."/>
            <person name="Green E.D."/>
            <person name="Waterston R.H."/>
            <person name="Wilson R.K."/>
        </authorList>
    </citation>
    <scope>NUCLEOTIDE SEQUENCE [LARGE SCALE GENOMIC DNA]</scope>
</reference>
<reference key="6">
    <citation type="journal article" date="2004" name="Genome Res.">
        <title>The status, quality, and expansion of the NIH full-length cDNA project: the Mammalian Gene Collection (MGC).</title>
        <authorList>
            <consortium name="The MGC Project Team"/>
        </authorList>
    </citation>
    <scope>NUCLEOTIDE SEQUENCE [LARGE SCALE MRNA] (ISOFORM 3)</scope>
    <scope>NUCLEOTIDE SEQUENCE [LARGE SCALE MRNA] OF 316-920 (ISOFORM 1)</scope>
    <source>
        <tissue>Kidney</tissue>
        <tissue>Uterus</tissue>
    </source>
</reference>
<reference key="7">
    <citation type="journal article" date="2001" name="DNA Res.">
        <title>Prediction of the coding sequences of unidentified human genes. XXI. The complete sequences of 60 new cDNA clones from brain which code for large proteins.</title>
        <authorList>
            <person name="Nagase T."/>
            <person name="Kikuno R."/>
            <person name="Ohara O."/>
        </authorList>
    </citation>
    <scope>NUCLEOTIDE SEQUENCE [LARGE SCALE MRNA] OF 240-920 (ISOFORM 2)</scope>
    <source>
        <tissue>Brain</tissue>
    </source>
</reference>
<reference key="8">
    <citation type="journal article" date="2001" name="Genome Res.">
        <title>Towards a catalog of human genes and proteins: sequencing and analysis of 500 novel complete protein coding human cDNAs.</title>
        <authorList>
            <person name="Wiemann S."/>
            <person name="Weil B."/>
            <person name="Wellenreuther R."/>
            <person name="Gassenhuber J."/>
            <person name="Glassl S."/>
            <person name="Ansorge W."/>
            <person name="Boecher M."/>
            <person name="Bloecker H."/>
            <person name="Bauersachs S."/>
            <person name="Blum H."/>
            <person name="Lauber J."/>
            <person name="Duesterhoeft A."/>
            <person name="Beyer A."/>
            <person name="Koehrer K."/>
            <person name="Strack N."/>
            <person name="Mewes H.-W."/>
            <person name="Ottenwaelder B."/>
            <person name="Obermaier B."/>
            <person name="Tampe J."/>
            <person name="Heubner D."/>
            <person name="Wambutt R."/>
            <person name="Korn B."/>
            <person name="Klein M."/>
            <person name="Poustka A."/>
        </authorList>
    </citation>
    <scope>NUCLEOTIDE SEQUENCE [LARGE SCALE MRNA] OF 332-920</scope>
    <source>
        <tissue>Amygdala</tissue>
        <tissue>Fetal brain</tissue>
    </source>
</reference>
<reference key="9">
    <citation type="journal article" date="1998" name="Nat. Biotechnol.">
        <title>Selection system for genes encoding nuclear-targeted proteins.</title>
        <authorList>
            <person name="Ueki N."/>
            <person name="Oda T."/>
            <person name="Kondo M."/>
            <person name="Yano K."/>
            <person name="Noguchi T."/>
            <person name="Muramatsu M.-A."/>
        </authorList>
    </citation>
    <scope>NUCLEOTIDE SEQUENCE [LARGE SCALE MRNA] OF 668-920</scope>
    <scope>SUBCELLULAR LOCATION</scope>
    <source>
        <tissue>Fetal brain</tissue>
    </source>
</reference>
<reference key="10">
    <citation type="journal article" date="2014" name="Mol. Cell. Proteomics">
        <title>Immunoaffinity enrichment and mass spectrometry analysis of protein methylation.</title>
        <authorList>
            <person name="Guo A."/>
            <person name="Gu H."/>
            <person name="Zhou J."/>
            <person name="Mulhern D."/>
            <person name="Wang Y."/>
            <person name="Lee K.A."/>
            <person name="Yang V."/>
            <person name="Aguiar M."/>
            <person name="Kornhauser J."/>
            <person name="Jia X."/>
            <person name="Ren J."/>
            <person name="Beausoleil S.A."/>
            <person name="Silva J.C."/>
            <person name="Vemulapalli V."/>
            <person name="Bedford M.T."/>
            <person name="Comb M.J."/>
        </authorList>
    </citation>
    <scope>METHYLATION [LARGE SCALE ANALYSIS] AT ARG-245 AND ARG-262</scope>
    <scope>IDENTIFICATION BY MASS SPECTROMETRY [LARGE SCALE ANALYSIS]</scope>
    <source>
        <tissue>Colon carcinoma</tissue>
    </source>
</reference>
<reference key="11">
    <citation type="journal article" date="2015" name="Cell Rep.">
        <title>SUMO-2 orchestrates chromatin modifiers in response to DNA damage.</title>
        <authorList>
            <person name="Hendriks I.A."/>
            <person name="Treffers L.W."/>
            <person name="Verlaan-de Vries M."/>
            <person name="Olsen J.V."/>
            <person name="Vertegaal A.C."/>
        </authorList>
    </citation>
    <scope>SUMOYLATION [LARGE SCALE ANALYSIS] AT LYS-402</scope>
    <scope>IDENTIFICATION BY MASS SPECTROMETRY [LARGE SCALE ANALYSIS]</scope>
</reference>
<reference key="12">
    <citation type="journal article" date="2017" name="Nat. Struct. Mol. Biol.">
        <title>Site-specific mapping of the human SUMO proteome reveals co-modification with phosphorylation.</title>
        <authorList>
            <person name="Hendriks I.A."/>
            <person name="Lyon D."/>
            <person name="Young C."/>
            <person name="Jensen L.J."/>
            <person name="Vertegaal A.C."/>
            <person name="Nielsen M.L."/>
        </authorList>
    </citation>
    <scope>SUMOYLATION [LARGE SCALE ANALYSIS] AT LYS-402; LYS-457 AND LYS-692</scope>
    <scope>IDENTIFICATION BY MASS SPECTROMETRY [LARGE SCALE ANALYSIS]</scope>
</reference>
<accession>Q8NF64</accession>
<accession>A4D2K7</accession>
<accession>D3DVL1</accession>
<accession>O94790</accession>
<accession>Q0VGB4</accession>
<accession>Q659A8</accession>
<accession>Q6JKL5</accession>
<accession>Q8WTX8</accession>
<accession>Q96Q01</accession>
<accession>Q9BQH7</accession>
<keyword id="KW-0025">Alternative splicing</keyword>
<keyword id="KW-1017">Isopeptide bond</keyword>
<keyword id="KW-0479">Metal-binding</keyword>
<keyword id="KW-0488">Methylation</keyword>
<keyword id="KW-0539">Nucleus</keyword>
<keyword id="KW-1267">Proteomics identification</keyword>
<keyword id="KW-1185">Reference proteome</keyword>
<keyword id="KW-0804">Transcription</keyword>
<keyword id="KW-0805">Transcription regulation</keyword>
<keyword id="KW-0832">Ubl conjugation</keyword>
<keyword id="KW-0862">Zinc</keyword>
<keyword id="KW-0863">Zinc-finger</keyword>
<proteinExistence type="evidence at protein level"/>